<organism>
    <name type="scientific">Bacillus anthracis</name>
    <dbReference type="NCBI Taxonomy" id="1392"/>
    <lineage>
        <taxon>Bacteria</taxon>
        <taxon>Bacillati</taxon>
        <taxon>Bacillota</taxon>
        <taxon>Bacilli</taxon>
        <taxon>Bacillales</taxon>
        <taxon>Bacillaceae</taxon>
        <taxon>Bacillus</taxon>
        <taxon>Bacillus cereus group</taxon>
    </lineage>
</organism>
<sequence>MRVDGREKTELRHIHIHTNYLKHPEGSVLIEVGDTKVICSATIEERVPPFMRGEGKGWVTAEYAMIPRATEQRTIRESSKGKVTGRTMEIQRLIGRALRAVVDLEALGERTVWIDCDVIQADGGTRTASITGAYVAMVLAFEKLLQAEKVSKIPVKDYLAATSVGIVEEQGVVLDLNYAEDSKADVDMNVIMTGKGQFVEVQGTGEEATFSRAQLNELLDAAEQGIFQLIDIQKEALGDIVSHIE</sequence>
<feature type="chain" id="PRO_0000139862" description="Ribonuclease PH">
    <location>
        <begin position="1"/>
        <end position="245"/>
    </location>
</feature>
<feature type="binding site" evidence="1 2">
    <location>
        <position position="86"/>
    </location>
    <ligand>
        <name>phosphate</name>
        <dbReference type="ChEBI" id="CHEBI:43474"/>
        <note>substrate</note>
    </ligand>
</feature>
<feature type="binding site" evidence="1 2">
    <location>
        <begin position="124"/>
        <end position="126"/>
    </location>
    <ligand>
        <name>phosphate</name>
        <dbReference type="ChEBI" id="CHEBI:43474"/>
        <note>substrate</note>
    </ligand>
</feature>
<feature type="strand" evidence="4">
    <location>
        <begin position="14"/>
        <end position="19"/>
    </location>
</feature>
<feature type="strand" evidence="4">
    <location>
        <begin position="21"/>
        <end position="32"/>
    </location>
</feature>
<feature type="strand" evidence="4">
    <location>
        <begin position="35"/>
        <end position="45"/>
    </location>
</feature>
<feature type="helix" evidence="4">
    <location>
        <begin position="49"/>
        <end position="51"/>
    </location>
</feature>
<feature type="strand" evidence="4">
    <location>
        <begin position="58"/>
        <end position="65"/>
    </location>
</feature>
<feature type="strand" evidence="4">
    <location>
        <begin position="69"/>
        <end position="72"/>
    </location>
</feature>
<feature type="helix" evidence="4">
    <location>
        <begin position="85"/>
        <end position="101"/>
    </location>
</feature>
<feature type="helix" evidence="4">
    <location>
        <begin position="104"/>
        <end position="107"/>
    </location>
</feature>
<feature type="strand" evidence="4">
    <location>
        <begin position="111"/>
        <end position="120"/>
    </location>
</feature>
<feature type="helix" evidence="4">
    <location>
        <begin position="125"/>
        <end position="146"/>
    </location>
</feature>
<feature type="strand" evidence="4">
    <location>
        <begin position="149"/>
        <end position="152"/>
    </location>
</feature>
<feature type="strand" evidence="4">
    <location>
        <begin position="155"/>
        <end position="157"/>
    </location>
</feature>
<feature type="strand" evidence="4">
    <location>
        <begin position="159"/>
        <end position="167"/>
    </location>
</feature>
<feature type="turn" evidence="4">
    <location>
        <begin position="168"/>
        <end position="170"/>
    </location>
</feature>
<feature type="strand" evidence="4">
    <location>
        <begin position="171"/>
        <end position="175"/>
    </location>
</feature>
<feature type="helix" evidence="4">
    <location>
        <begin position="178"/>
        <end position="182"/>
    </location>
</feature>
<feature type="strand" evidence="4">
    <location>
        <begin position="184"/>
        <end position="193"/>
    </location>
</feature>
<feature type="strand" evidence="4">
    <location>
        <begin position="198"/>
        <end position="208"/>
    </location>
</feature>
<feature type="helix" evidence="4">
    <location>
        <begin position="212"/>
        <end position="237"/>
    </location>
</feature>
<feature type="helix" evidence="4">
    <location>
        <begin position="238"/>
        <end position="243"/>
    </location>
</feature>
<protein>
    <recommendedName>
        <fullName evidence="1">Ribonuclease PH</fullName>
        <shortName evidence="1">RNase PH</shortName>
        <ecNumber evidence="1">2.7.7.56</ecNumber>
    </recommendedName>
    <alternativeName>
        <fullName evidence="1">tRNA nucleotidyltransferase</fullName>
    </alternativeName>
</protein>
<gene>
    <name evidence="1" type="primary">rph</name>
    <name type="ordered locus">BA_4715</name>
    <name type="ordered locus">GBAA_4715</name>
    <name type="ordered locus">BAS4377</name>
</gene>
<keyword id="KW-0002">3D-structure</keyword>
<keyword id="KW-0548">Nucleotidyltransferase</keyword>
<keyword id="KW-1185">Reference proteome</keyword>
<keyword id="KW-0694">RNA-binding</keyword>
<keyword id="KW-0698">rRNA processing</keyword>
<keyword id="KW-0808">Transferase</keyword>
<keyword id="KW-0819">tRNA processing</keyword>
<keyword id="KW-0820">tRNA-binding</keyword>
<accession>Q81LA9</accession>
<accession>Q6HSR4</accession>
<accession>Q6KM05</accession>
<proteinExistence type="evidence at protein level"/>
<dbReference type="EC" id="2.7.7.56" evidence="1"/>
<dbReference type="EMBL" id="AE016879">
    <property type="protein sequence ID" value="AAP28413.1"/>
    <property type="molecule type" value="Genomic_DNA"/>
</dbReference>
<dbReference type="EMBL" id="AE017334">
    <property type="protein sequence ID" value="AAT33839.1"/>
    <property type="molecule type" value="Genomic_DNA"/>
</dbReference>
<dbReference type="EMBL" id="AE017225">
    <property type="protein sequence ID" value="AAT56675.1"/>
    <property type="molecule type" value="Genomic_DNA"/>
</dbReference>
<dbReference type="RefSeq" id="NP_846927.1">
    <property type="nucleotide sequence ID" value="NC_003997.3"/>
</dbReference>
<dbReference type="RefSeq" id="WP_001261764.1">
    <property type="nucleotide sequence ID" value="NZ_WXXJ01000001.1"/>
</dbReference>
<dbReference type="RefSeq" id="YP_030624.1">
    <property type="nucleotide sequence ID" value="NC_005945.1"/>
</dbReference>
<dbReference type="PDB" id="3DD6">
    <property type="method" value="X-ray"/>
    <property type="resolution" value="1.70 A"/>
    <property type="chains" value="A=1-245"/>
</dbReference>
<dbReference type="PDBsum" id="3DD6"/>
<dbReference type="SMR" id="Q81LA9"/>
<dbReference type="IntAct" id="Q81LA9">
    <property type="interactions" value="1"/>
</dbReference>
<dbReference type="STRING" id="261594.GBAA_4715"/>
<dbReference type="DNASU" id="1088544"/>
<dbReference type="GeneID" id="45024354"/>
<dbReference type="KEGG" id="ban:BA_4715"/>
<dbReference type="KEGG" id="bar:GBAA_4715"/>
<dbReference type="KEGG" id="bat:BAS4377"/>
<dbReference type="PATRIC" id="fig|198094.11.peg.4680"/>
<dbReference type="eggNOG" id="COG0689">
    <property type="taxonomic scope" value="Bacteria"/>
</dbReference>
<dbReference type="HOGENOM" id="CLU_050858_0_0_9"/>
<dbReference type="OMA" id="RYNMAPF"/>
<dbReference type="OrthoDB" id="9802265at2"/>
<dbReference type="EvolutionaryTrace" id="Q81LA9"/>
<dbReference type="Proteomes" id="UP000000427">
    <property type="component" value="Chromosome"/>
</dbReference>
<dbReference type="Proteomes" id="UP000000594">
    <property type="component" value="Chromosome"/>
</dbReference>
<dbReference type="GO" id="GO:0000175">
    <property type="term" value="F:3'-5'-RNA exonuclease activity"/>
    <property type="evidence" value="ECO:0007669"/>
    <property type="project" value="UniProtKB-UniRule"/>
</dbReference>
<dbReference type="GO" id="GO:0000049">
    <property type="term" value="F:tRNA binding"/>
    <property type="evidence" value="ECO:0007669"/>
    <property type="project" value="UniProtKB-UniRule"/>
</dbReference>
<dbReference type="GO" id="GO:0009022">
    <property type="term" value="F:tRNA nucleotidyltransferase activity"/>
    <property type="evidence" value="ECO:0007669"/>
    <property type="project" value="UniProtKB-UniRule"/>
</dbReference>
<dbReference type="GO" id="GO:0016075">
    <property type="term" value="P:rRNA catabolic process"/>
    <property type="evidence" value="ECO:0007669"/>
    <property type="project" value="UniProtKB-UniRule"/>
</dbReference>
<dbReference type="GO" id="GO:0006364">
    <property type="term" value="P:rRNA processing"/>
    <property type="evidence" value="ECO:0007669"/>
    <property type="project" value="UniProtKB-KW"/>
</dbReference>
<dbReference type="GO" id="GO:0008033">
    <property type="term" value="P:tRNA processing"/>
    <property type="evidence" value="ECO:0007669"/>
    <property type="project" value="UniProtKB-UniRule"/>
</dbReference>
<dbReference type="CDD" id="cd11362">
    <property type="entry name" value="RNase_PH_bact"/>
    <property type="match status" value="1"/>
</dbReference>
<dbReference type="FunFam" id="3.30.230.70:FF:000003">
    <property type="entry name" value="Ribonuclease PH"/>
    <property type="match status" value="1"/>
</dbReference>
<dbReference type="Gene3D" id="3.30.230.70">
    <property type="entry name" value="GHMP Kinase, N-terminal domain"/>
    <property type="match status" value="1"/>
</dbReference>
<dbReference type="HAMAP" id="MF_00564">
    <property type="entry name" value="RNase_PH"/>
    <property type="match status" value="1"/>
</dbReference>
<dbReference type="InterPro" id="IPR001247">
    <property type="entry name" value="ExoRNase_PH_dom1"/>
</dbReference>
<dbReference type="InterPro" id="IPR015847">
    <property type="entry name" value="ExoRNase_PH_dom2"/>
</dbReference>
<dbReference type="InterPro" id="IPR036345">
    <property type="entry name" value="ExoRNase_PH_dom2_sf"/>
</dbReference>
<dbReference type="InterPro" id="IPR027408">
    <property type="entry name" value="PNPase/RNase_PH_dom_sf"/>
</dbReference>
<dbReference type="InterPro" id="IPR020568">
    <property type="entry name" value="Ribosomal_Su5_D2-typ_SF"/>
</dbReference>
<dbReference type="InterPro" id="IPR050080">
    <property type="entry name" value="RNase_PH"/>
</dbReference>
<dbReference type="InterPro" id="IPR002381">
    <property type="entry name" value="RNase_PH_bac-type"/>
</dbReference>
<dbReference type="InterPro" id="IPR018336">
    <property type="entry name" value="RNase_PH_CS"/>
</dbReference>
<dbReference type="NCBIfam" id="TIGR01966">
    <property type="entry name" value="RNasePH"/>
    <property type="match status" value="1"/>
</dbReference>
<dbReference type="PANTHER" id="PTHR11953">
    <property type="entry name" value="EXOSOME COMPLEX COMPONENT"/>
    <property type="match status" value="1"/>
</dbReference>
<dbReference type="PANTHER" id="PTHR11953:SF0">
    <property type="entry name" value="EXOSOME COMPLEX COMPONENT RRP41"/>
    <property type="match status" value="1"/>
</dbReference>
<dbReference type="Pfam" id="PF01138">
    <property type="entry name" value="RNase_PH"/>
    <property type="match status" value="1"/>
</dbReference>
<dbReference type="Pfam" id="PF03725">
    <property type="entry name" value="RNase_PH_C"/>
    <property type="match status" value="1"/>
</dbReference>
<dbReference type="SUPFAM" id="SSF55666">
    <property type="entry name" value="Ribonuclease PH domain 2-like"/>
    <property type="match status" value="1"/>
</dbReference>
<dbReference type="SUPFAM" id="SSF54211">
    <property type="entry name" value="Ribosomal protein S5 domain 2-like"/>
    <property type="match status" value="1"/>
</dbReference>
<dbReference type="PROSITE" id="PS01277">
    <property type="entry name" value="RIBONUCLEASE_PH"/>
    <property type="match status" value="1"/>
</dbReference>
<comment type="function">
    <text evidence="1">Phosphorolytic 3'-5' exoribonuclease that plays an important role in tRNA 3'-end maturation. Removes nucleotide residues following the 3'-CCA terminus of tRNAs; can also add nucleotides to the ends of RNA molecules by using nucleoside diphosphates as substrates, but this may not be physiologically important. Probably plays a role in initiation of 16S rRNA degradation (leading to ribosome degradation) during starvation.</text>
</comment>
<comment type="catalytic activity">
    <reaction evidence="1">
        <text>tRNA(n+1) + phosphate = tRNA(n) + a ribonucleoside 5'-diphosphate</text>
        <dbReference type="Rhea" id="RHEA:10628"/>
        <dbReference type="Rhea" id="RHEA-COMP:17343"/>
        <dbReference type="Rhea" id="RHEA-COMP:17344"/>
        <dbReference type="ChEBI" id="CHEBI:43474"/>
        <dbReference type="ChEBI" id="CHEBI:57930"/>
        <dbReference type="ChEBI" id="CHEBI:173114"/>
        <dbReference type="EC" id="2.7.7.56"/>
    </reaction>
</comment>
<comment type="subunit">
    <text evidence="1 2">Homohexameric ring arranged as a trimer of dimers (PubMed:19153445).</text>
</comment>
<comment type="miscellaneous">
    <text evidence="2">Sulfate ions in the crystal structure may represent the inorganic phosphate substrate.</text>
</comment>
<comment type="similarity">
    <text evidence="1">Belongs to the RNase PH family.</text>
</comment>
<reference key="1">
    <citation type="journal article" date="2003" name="Nature">
        <title>The genome sequence of Bacillus anthracis Ames and comparison to closely related bacteria.</title>
        <authorList>
            <person name="Read T.D."/>
            <person name="Peterson S.N."/>
            <person name="Tourasse N.J."/>
            <person name="Baillie L.W."/>
            <person name="Paulsen I.T."/>
            <person name="Nelson K.E."/>
            <person name="Tettelin H."/>
            <person name="Fouts D.E."/>
            <person name="Eisen J.A."/>
            <person name="Gill S.R."/>
            <person name="Holtzapple E.K."/>
            <person name="Okstad O.A."/>
            <person name="Helgason E."/>
            <person name="Rilstone J."/>
            <person name="Wu M."/>
            <person name="Kolonay J.F."/>
            <person name="Beanan M.J."/>
            <person name="Dodson R.J."/>
            <person name="Brinkac L.M."/>
            <person name="Gwinn M.L."/>
            <person name="DeBoy R.T."/>
            <person name="Madpu R."/>
            <person name="Daugherty S.C."/>
            <person name="Durkin A.S."/>
            <person name="Haft D.H."/>
            <person name="Nelson W.C."/>
            <person name="Peterson J.D."/>
            <person name="Pop M."/>
            <person name="Khouri H.M."/>
            <person name="Radune D."/>
            <person name="Benton J.L."/>
            <person name="Mahamoud Y."/>
            <person name="Jiang L."/>
            <person name="Hance I.R."/>
            <person name="Weidman J.F."/>
            <person name="Berry K.J."/>
            <person name="Plaut R.D."/>
            <person name="Wolf A.M."/>
            <person name="Watkins K.L."/>
            <person name="Nierman W.C."/>
            <person name="Hazen A."/>
            <person name="Cline R.T."/>
            <person name="Redmond C."/>
            <person name="Thwaite J.E."/>
            <person name="White O."/>
            <person name="Salzberg S.L."/>
            <person name="Thomason B."/>
            <person name="Friedlander A.M."/>
            <person name="Koehler T.M."/>
            <person name="Hanna P.C."/>
            <person name="Kolstoe A.-B."/>
            <person name="Fraser C.M."/>
        </authorList>
    </citation>
    <scope>NUCLEOTIDE SEQUENCE [LARGE SCALE GENOMIC DNA]</scope>
    <source>
        <strain>Ames / isolate Porton</strain>
    </source>
</reference>
<reference key="2">
    <citation type="journal article" date="2009" name="J. Bacteriol.">
        <title>The complete genome sequence of Bacillus anthracis Ames 'Ancestor'.</title>
        <authorList>
            <person name="Ravel J."/>
            <person name="Jiang L."/>
            <person name="Stanley S.T."/>
            <person name="Wilson M.R."/>
            <person name="Decker R.S."/>
            <person name="Read T.D."/>
            <person name="Worsham P."/>
            <person name="Keim P.S."/>
            <person name="Salzberg S.L."/>
            <person name="Fraser-Liggett C.M."/>
            <person name="Rasko D.A."/>
        </authorList>
    </citation>
    <scope>NUCLEOTIDE SEQUENCE [LARGE SCALE GENOMIC DNA]</scope>
    <source>
        <strain>Ames ancestor</strain>
    </source>
</reference>
<reference key="3">
    <citation type="submission" date="2004-01" db="EMBL/GenBank/DDBJ databases">
        <title>Complete genome sequence of Bacillus anthracis Sterne.</title>
        <authorList>
            <person name="Brettin T.S."/>
            <person name="Bruce D."/>
            <person name="Challacombe J.F."/>
            <person name="Gilna P."/>
            <person name="Han C."/>
            <person name="Hill K."/>
            <person name="Hitchcock P."/>
            <person name="Jackson P."/>
            <person name="Keim P."/>
            <person name="Longmire J."/>
            <person name="Lucas S."/>
            <person name="Okinaka R."/>
            <person name="Richardson P."/>
            <person name="Rubin E."/>
            <person name="Tice H."/>
        </authorList>
    </citation>
    <scope>NUCLEOTIDE SEQUENCE [LARGE SCALE GENOMIC DNA]</scope>
    <source>
        <strain>Sterne</strain>
    </source>
</reference>
<reference evidence="3" key="4">
    <citation type="journal article" date="2009" name="Acta Crystallogr. F">
        <title>The structure of Rph, an exoribonuclease from Bacillus anthracis, at 1.7 A resolution.</title>
        <authorList>
            <person name="Rawlings A.E."/>
            <person name="Blagova E.V."/>
            <person name="Levdikov V.M."/>
            <person name="Fogg M.J."/>
            <person name="Wilson K.S."/>
            <person name="Wilkinson A.J."/>
        </authorList>
    </citation>
    <scope>X-RAY CRYSTALLOGRAPHY (1.70 ANGSTROMS) IN COMPLEX WITH SUBSTRATE</scope>
    <scope>SUBUNIT</scope>
    <source>
        <strain>Ames</strain>
    </source>
</reference>
<name>RNPH_BACAN</name>
<evidence type="ECO:0000255" key="1">
    <source>
        <dbReference type="HAMAP-Rule" id="MF_00564"/>
    </source>
</evidence>
<evidence type="ECO:0000305" key="2">
    <source>
    </source>
</evidence>
<evidence type="ECO:0007744" key="3">
    <source>
        <dbReference type="PDB" id="3DD6"/>
    </source>
</evidence>
<evidence type="ECO:0007829" key="4">
    <source>
        <dbReference type="PDB" id="3DD6"/>
    </source>
</evidence>